<keyword id="KW-0002">3D-structure</keyword>
<keyword id="KW-0378">Hydrolase</keyword>
<keyword id="KW-1185">Reference proteome</keyword>
<keyword id="KW-0964">Secreted</keyword>
<keyword id="KW-0719">Serine esterase</keyword>
<keyword id="KW-0732">Signal</keyword>
<accession>Q9HZY8</accession>
<dbReference type="EC" id="3.1.1.1"/>
<dbReference type="EMBL" id="AE004091">
    <property type="protein sequence ID" value="AAG06244.1"/>
    <property type="molecule type" value="Genomic_DNA"/>
</dbReference>
<dbReference type="PIR" id="D83288">
    <property type="entry name" value="D83288"/>
</dbReference>
<dbReference type="RefSeq" id="NP_251546.1">
    <property type="nucleotide sequence ID" value="NC_002516.2"/>
</dbReference>
<dbReference type="RefSeq" id="WP_003114753.1">
    <property type="nucleotide sequence ID" value="NZ_QZGE01000011.1"/>
</dbReference>
<dbReference type="PDB" id="4JGG">
    <property type="method" value="X-ray"/>
    <property type="resolution" value="1.90 A"/>
    <property type="chains" value="A/B=1-201"/>
</dbReference>
<dbReference type="PDBsum" id="4JGG"/>
<dbReference type="SMR" id="Q9HZY8"/>
<dbReference type="FunCoup" id="Q9HZY8">
    <property type="interactions" value="119"/>
</dbReference>
<dbReference type="STRING" id="208964.PA2856"/>
<dbReference type="PaxDb" id="208964-PA2856"/>
<dbReference type="DNASU" id="878554"/>
<dbReference type="GeneID" id="878554"/>
<dbReference type="KEGG" id="pae:PA2856"/>
<dbReference type="PATRIC" id="fig|208964.12.peg.2996"/>
<dbReference type="PseudoCAP" id="PA2856"/>
<dbReference type="HOGENOM" id="CLU_051180_3_0_6"/>
<dbReference type="InParanoid" id="Q9HZY8"/>
<dbReference type="OrthoDB" id="9786188at2"/>
<dbReference type="PhylomeDB" id="Q9HZY8"/>
<dbReference type="BioCyc" id="PAER208964:G1FZ6-2906-MONOMER"/>
<dbReference type="SABIO-RK" id="Q9HZY8"/>
<dbReference type="EvolutionaryTrace" id="Q9HZY8"/>
<dbReference type="Proteomes" id="UP000002438">
    <property type="component" value="Chromosome"/>
</dbReference>
<dbReference type="GO" id="GO:0005576">
    <property type="term" value="C:extracellular region"/>
    <property type="evidence" value="ECO:0007669"/>
    <property type="project" value="UniProtKB-SubCell"/>
</dbReference>
<dbReference type="GO" id="GO:0004064">
    <property type="term" value="F:arylesterase activity"/>
    <property type="evidence" value="ECO:0000314"/>
    <property type="project" value="PseudoCAP"/>
</dbReference>
<dbReference type="GO" id="GO:0106435">
    <property type="term" value="F:carboxylesterase activity"/>
    <property type="evidence" value="ECO:0000314"/>
    <property type="project" value="UniProtKB"/>
</dbReference>
<dbReference type="GO" id="GO:0004622">
    <property type="term" value="F:lysophospholipase activity"/>
    <property type="evidence" value="ECO:0000314"/>
    <property type="project" value="PseudoCAP"/>
</dbReference>
<dbReference type="CDD" id="cd01822">
    <property type="entry name" value="Lysophospholipase_L1_like"/>
    <property type="match status" value="1"/>
</dbReference>
<dbReference type="FunFam" id="3.40.50.1110:FF:000001">
    <property type="entry name" value="Multifunctional acyl-CoA thioesterase I"/>
    <property type="match status" value="1"/>
</dbReference>
<dbReference type="Gene3D" id="3.40.50.1110">
    <property type="entry name" value="SGNH hydrolase"/>
    <property type="match status" value="1"/>
</dbReference>
<dbReference type="InterPro" id="IPR051532">
    <property type="entry name" value="Ester_Hydrolysis_Enzymes"/>
</dbReference>
<dbReference type="InterPro" id="IPR013830">
    <property type="entry name" value="SGNH_hydro"/>
</dbReference>
<dbReference type="InterPro" id="IPR036514">
    <property type="entry name" value="SGNH_hydro_sf"/>
</dbReference>
<dbReference type="PANTHER" id="PTHR30383">
    <property type="entry name" value="THIOESTERASE 1/PROTEASE 1/LYSOPHOSPHOLIPASE L1"/>
    <property type="match status" value="1"/>
</dbReference>
<dbReference type="PANTHER" id="PTHR30383:SF24">
    <property type="entry name" value="THIOESTERASE 1_PROTEASE 1_LYSOPHOSPHOLIPASE L1"/>
    <property type="match status" value="1"/>
</dbReference>
<dbReference type="Pfam" id="PF13472">
    <property type="entry name" value="Lipase_GDSL_2"/>
    <property type="match status" value="1"/>
</dbReference>
<dbReference type="SUPFAM" id="SSF52266">
    <property type="entry name" value="SGNH hydrolase"/>
    <property type="match status" value="1"/>
</dbReference>
<proteinExistence type="evidence at protein level"/>
<comment type="function">
    <text evidence="3">Esterase that exhibits the highest activity towards Tween detergents and p-nitrophenyl esters of short acyl chain length. Also displays a low thioesterase activity towards palmitoyl-coenzyme A, but is not active towards acetyl-coenzyme A.</text>
</comment>
<comment type="catalytic activity">
    <reaction evidence="3">
        <text>a carboxylic ester + H2O = an alcohol + a carboxylate + H(+)</text>
        <dbReference type="Rhea" id="RHEA:21164"/>
        <dbReference type="ChEBI" id="CHEBI:15377"/>
        <dbReference type="ChEBI" id="CHEBI:15378"/>
        <dbReference type="ChEBI" id="CHEBI:29067"/>
        <dbReference type="ChEBI" id="CHEBI:30879"/>
        <dbReference type="ChEBI" id="CHEBI:33308"/>
        <dbReference type="EC" id="3.1.1.1"/>
    </reaction>
</comment>
<comment type="biophysicochemical properties">
    <kinetics>
        <KM evidence="3">1 mM for p-nitrophenyl butyrate</KM>
        <Vmax evidence="3">37.0 umol/min/mg enzyme with p-nitrophenyl butyrate as substrate</Vmax>
    </kinetics>
</comment>
<comment type="subcellular location">
    <subcellularLocation>
        <location evidence="1">Secreted</location>
    </subcellularLocation>
</comment>
<comment type="similarity">
    <text evidence="4">Belongs to the 'GDSL' lipolytic enzyme family.</text>
</comment>
<reference key="1">
    <citation type="journal article" date="2000" name="Nature">
        <title>Complete genome sequence of Pseudomonas aeruginosa PAO1, an opportunistic pathogen.</title>
        <authorList>
            <person name="Stover C.K."/>
            <person name="Pham X.-Q.T."/>
            <person name="Erwin A.L."/>
            <person name="Mizoguchi S.D."/>
            <person name="Warrener P."/>
            <person name="Hickey M.J."/>
            <person name="Brinkman F.S.L."/>
            <person name="Hufnagle W.O."/>
            <person name="Kowalik D.J."/>
            <person name="Lagrou M."/>
            <person name="Garber R.L."/>
            <person name="Goltry L."/>
            <person name="Tolentino E."/>
            <person name="Westbrock-Wadman S."/>
            <person name="Yuan Y."/>
            <person name="Brody L.L."/>
            <person name="Coulter S.N."/>
            <person name="Folger K.R."/>
            <person name="Kas A."/>
            <person name="Larbig K."/>
            <person name="Lim R.M."/>
            <person name="Smith K.A."/>
            <person name="Spencer D.H."/>
            <person name="Wong G.K.-S."/>
            <person name="Wu Z."/>
            <person name="Paulsen I.T."/>
            <person name="Reizer J."/>
            <person name="Saier M.H. Jr."/>
            <person name="Hancock R.E.W."/>
            <person name="Lory S."/>
            <person name="Olson M.V."/>
        </authorList>
    </citation>
    <scope>NUCLEOTIDE SEQUENCE [LARGE SCALE GENOMIC DNA]</scope>
    <source>
        <strain>ATCC 15692 / DSM 22644 / CIP 104116 / JCM 14847 / LMG 12228 / 1C / PRS 101 / PAO1</strain>
    </source>
</reference>
<reference key="2">
    <citation type="journal article" date="2010" name="ChemBioChem">
        <title>Probing enzyme promiscuity of SGNH hydrolases.</title>
        <authorList>
            <person name="Lescic Asler I."/>
            <person name="Ivic N."/>
            <person name="Kovacic F."/>
            <person name="Schell S."/>
            <person name="Knorr J."/>
            <person name="Krauss U."/>
            <person name="Wilhelm S."/>
            <person name="Kojic-Prodic B."/>
            <person name="Jaeger K.E."/>
        </authorList>
    </citation>
    <scope>FUNCTION</scope>
    <scope>CATALYTIC ACTIVITY</scope>
    <scope>SUBSTRATE SPECIFICITY</scope>
    <scope>KINETIC PARAMETERS</scope>
</reference>
<evidence type="ECO:0000250" key="1"/>
<evidence type="ECO:0000255" key="2"/>
<evidence type="ECO:0000269" key="3">
    <source>
    </source>
</evidence>
<evidence type="ECO:0000305" key="4"/>
<evidence type="ECO:0007829" key="5">
    <source>
        <dbReference type="PDB" id="4JGG"/>
    </source>
</evidence>
<feature type="signal peptide" evidence="2">
    <location>
        <begin position="1"/>
        <end position="21"/>
    </location>
</feature>
<feature type="chain" id="PRO_0000407315" description="Esterase TesA">
    <location>
        <begin position="22"/>
        <end position="201"/>
    </location>
</feature>
<feature type="active site" description="Nucleophile" evidence="1">
    <location>
        <position position="30"/>
    </location>
</feature>
<feature type="active site" evidence="1">
    <location>
        <position position="177"/>
    </location>
</feature>
<feature type="active site" evidence="1">
    <location>
        <position position="180"/>
    </location>
</feature>
<feature type="strand" evidence="5">
    <location>
        <begin position="23"/>
        <end position="28"/>
    </location>
</feature>
<feature type="helix" evidence="5">
    <location>
        <begin position="30"/>
        <end position="33"/>
    </location>
</feature>
<feature type="turn" evidence="5">
    <location>
        <begin position="34"/>
        <end position="36"/>
    </location>
</feature>
<feature type="helix" evidence="5">
    <location>
        <begin position="39"/>
        <end position="41"/>
    </location>
</feature>
<feature type="helix" evidence="5">
    <location>
        <begin position="43"/>
        <end position="53"/>
    </location>
</feature>
<feature type="strand" evidence="5">
    <location>
        <begin position="59"/>
        <end position="62"/>
    </location>
</feature>
<feature type="helix" evidence="5">
    <location>
        <begin position="70"/>
        <end position="84"/>
    </location>
</feature>
<feature type="strand" evidence="5">
    <location>
        <begin position="87"/>
        <end position="92"/>
    </location>
</feature>
<feature type="helix" evidence="5">
    <location>
        <begin position="95"/>
        <end position="99"/>
    </location>
</feature>
<feature type="helix" evidence="5">
    <location>
        <begin position="104"/>
        <end position="121"/>
    </location>
</feature>
<feature type="strand" evidence="5">
    <location>
        <begin position="124"/>
        <end position="128"/>
    </location>
</feature>
<feature type="helix" evidence="5">
    <location>
        <begin position="134"/>
        <end position="136"/>
    </location>
</feature>
<feature type="helix" evidence="5">
    <location>
        <begin position="138"/>
        <end position="155"/>
    </location>
</feature>
<feature type="strand" evidence="5">
    <location>
        <begin position="158"/>
        <end position="160"/>
    </location>
</feature>
<feature type="turn" evidence="5">
    <location>
        <begin position="161"/>
        <end position="169"/>
    </location>
</feature>
<feature type="turn" evidence="5">
    <location>
        <begin position="171"/>
        <end position="173"/>
    </location>
</feature>
<feature type="strand" evidence="5">
    <location>
        <begin position="178"/>
        <end position="181"/>
    </location>
</feature>
<feature type="helix" evidence="5">
    <location>
        <begin position="183"/>
        <end position="185"/>
    </location>
</feature>
<feature type="helix" evidence="5">
    <location>
        <begin position="186"/>
        <end position="197"/>
    </location>
</feature>
<feature type="helix" evidence="5">
    <location>
        <begin position="198"/>
        <end position="200"/>
    </location>
</feature>
<name>EST_PSEAE</name>
<gene>
    <name type="primary">tesA</name>
    <name type="ordered locus">PA2856</name>
</gene>
<protein>
    <recommendedName>
        <fullName>Esterase TesA</fullName>
        <ecNumber>3.1.1.1</ecNumber>
    </recommendedName>
</protein>
<sequence length="201" mass="21038">MRALLLSGCLALVLLTQQAAAQTLLVVGDSISAALGLDTSQGWVALLQKRLADEGYDYRVVNASISGDTSAGGLARLPALLAEEKPALVVIELGGNDGLRGMAPAQLQQNLASMAQKARAEGAKVLLLGIQLPPNYGPRYIEAFSRVYGAVAAQEKTALVPFFLEGVGGVQGMMQADGIHPALAAQPRLLENVWPTLKPLL</sequence>
<organism>
    <name type="scientific">Pseudomonas aeruginosa (strain ATCC 15692 / DSM 22644 / CIP 104116 / JCM 14847 / LMG 12228 / 1C / PRS 101 / PAO1)</name>
    <dbReference type="NCBI Taxonomy" id="208964"/>
    <lineage>
        <taxon>Bacteria</taxon>
        <taxon>Pseudomonadati</taxon>
        <taxon>Pseudomonadota</taxon>
        <taxon>Gammaproteobacteria</taxon>
        <taxon>Pseudomonadales</taxon>
        <taxon>Pseudomonadaceae</taxon>
        <taxon>Pseudomonas</taxon>
    </lineage>
</organism>